<gene>
    <name evidence="8" type="ORF">BgramDRAFT_5566</name>
    <name evidence="7" type="ORF">R8871_06335</name>
</gene>
<proteinExistence type="evidence at protein level"/>
<protein>
    <recommendedName>
        <fullName evidence="5">D-apiose import binding protein</fullName>
    </recommendedName>
    <alternativeName>
        <fullName evidence="4">D-apiose binding SBP</fullName>
    </alternativeName>
</protein>
<reference key="1">
    <citation type="submission" date="2008-03" db="EMBL/GenBank/DDBJ databases">
        <title>Sequencing of the draft genome and assembly of Burkholderia graminis C4D1M.</title>
        <authorList>
            <consortium name="US DOE Joint Genome Institute (JGI-PGF)"/>
            <person name="Copeland A."/>
            <person name="Lucas S."/>
            <person name="Lapidus A."/>
            <person name="Glavina del Rio T."/>
            <person name="Dalin E."/>
            <person name="Tice H."/>
            <person name="Bruce D."/>
            <person name="Goodwin L."/>
            <person name="Pitluck S."/>
            <person name="Larimer F."/>
            <person name="Land M.L."/>
            <person name="Hauser L."/>
            <person name="Tiedje J."/>
            <person name="Richardson P."/>
        </authorList>
    </citation>
    <scope>NUCLEOTIDE SEQUENCE [LARGE SCALE GENOMIC DNA]</scope>
    <source>
        <strain>ATCC 700544 / DSM 17151 / LMG 18924 / NCIMB 13744 / C4D1M</strain>
    </source>
</reference>
<reference key="2">
    <citation type="submission" date="2020-04" db="EMBL/GenBank/DDBJ databases">
        <authorList>
            <person name="De Canck E."/>
        </authorList>
    </citation>
    <scope>NUCLEOTIDE SEQUENCE [LARGE SCALE GENOMIC DNA]</scope>
    <source>
        <strain>ATCC 700544 / DSM 17151 / LMG 18924 / NCIMB 13744 / C4D1M</strain>
    </source>
</reference>
<reference key="3">
    <citation type="journal article" date="2018" name="Nat. Chem. Biol.">
        <title>Functional assignment of multiple catabolic pathways for D-apiose.</title>
        <authorList>
            <person name="Carter M.S."/>
            <person name="Zhang X."/>
            <person name="Huang H."/>
            <person name="Bouvier J.T."/>
            <person name="Francisco B.S."/>
            <person name="Vetting M.W."/>
            <person name="Al-Obaidi N."/>
            <person name="Bonanno J.B."/>
            <person name="Ghosh A."/>
            <person name="Zallot R.G."/>
            <person name="Andersen H.M."/>
            <person name="Almo S.C."/>
            <person name="Gerlt J.A."/>
        </authorList>
    </citation>
    <scope>FUNCTION</scope>
    <scope>SUBSTRATE-BINDING</scope>
</reference>
<organism>
    <name type="scientific">Paraburkholderia graminis (strain ATCC 700544 / DSM 17151 / LMG 18924 / NCIMB 13744 / C4D1M)</name>
    <dbReference type="NCBI Taxonomy" id="396598"/>
    <lineage>
        <taxon>Bacteria</taxon>
        <taxon>Pseudomonadati</taxon>
        <taxon>Pseudomonadota</taxon>
        <taxon>Betaproteobacteria</taxon>
        <taxon>Burkholderiales</taxon>
        <taxon>Burkholderiaceae</taxon>
        <taxon>Paraburkholderia</taxon>
    </lineage>
</organism>
<comment type="function">
    <text evidence="3 6">Part of an ABC transporter complex involved in D-apiose import (Probable). Binds D-apiose, D-ribose and D-ribulose (PubMed:29867142).</text>
</comment>
<comment type="subcellular location">
    <subcellularLocation>
        <location evidence="5">Periplasm</location>
    </subcellularLocation>
</comment>
<comment type="similarity">
    <text evidence="5">Belongs to the bacterial solute-binding protein 2 family.</text>
</comment>
<dbReference type="EMBL" id="ABLD01000025">
    <property type="protein sequence ID" value="EDT07597.1"/>
    <property type="molecule type" value="Genomic_DNA"/>
</dbReference>
<dbReference type="EMBL" id="CADIKA010000024">
    <property type="protein sequence ID" value="CAB3737527.1"/>
    <property type="molecule type" value="Genomic_DNA"/>
</dbReference>
<dbReference type="RefSeq" id="WP_006052135.1">
    <property type="nucleotide sequence ID" value="NZ_ABLD01000025.1"/>
</dbReference>
<dbReference type="SMR" id="B1G898"/>
<dbReference type="OrthoDB" id="9805127at2"/>
<dbReference type="Proteomes" id="UP000005045">
    <property type="component" value="Unassembled WGS sequence"/>
</dbReference>
<dbReference type="GO" id="GO:0042597">
    <property type="term" value="C:periplasmic space"/>
    <property type="evidence" value="ECO:0007669"/>
    <property type="project" value="UniProtKB-SubCell"/>
</dbReference>
<dbReference type="GO" id="GO:0030246">
    <property type="term" value="F:carbohydrate binding"/>
    <property type="evidence" value="ECO:0007669"/>
    <property type="project" value="UniProtKB-ARBA"/>
</dbReference>
<dbReference type="CDD" id="cd19967">
    <property type="entry name" value="PBP1_TmRBP-like"/>
    <property type="match status" value="1"/>
</dbReference>
<dbReference type="Gene3D" id="3.40.50.2300">
    <property type="match status" value="2"/>
</dbReference>
<dbReference type="InterPro" id="IPR028082">
    <property type="entry name" value="Peripla_BP_I"/>
</dbReference>
<dbReference type="InterPro" id="IPR025997">
    <property type="entry name" value="SBP_2_dom"/>
</dbReference>
<dbReference type="PANTHER" id="PTHR46847">
    <property type="entry name" value="D-ALLOSE-BINDING PERIPLASMIC PROTEIN-RELATED"/>
    <property type="match status" value="1"/>
</dbReference>
<dbReference type="PANTHER" id="PTHR46847:SF1">
    <property type="entry name" value="D-ALLOSE-BINDING PERIPLASMIC PROTEIN-RELATED"/>
    <property type="match status" value="1"/>
</dbReference>
<dbReference type="Pfam" id="PF13407">
    <property type="entry name" value="Peripla_BP_4"/>
    <property type="match status" value="1"/>
</dbReference>
<dbReference type="SUPFAM" id="SSF53822">
    <property type="entry name" value="Periplasmic binding protein-like I"/>
    <property type="match status" value="1"/>
</dbReference>
<evidence type="ECO:0000250" key="1">
    <source>
        <dbReference type="UniProtKB" id="Q2JZQ5"/>
    </source>
</evidence>
<evidence type="ECO:0000255" key="2"/>
<evidence type="ECO:0000269" key="3">
    <source>
    </source>
</evidence>
<evidence type="ECO:0000303" key="4">
    <source>
    </source>
</evidence>
<evidence type="ECO:0000305" key="5"/>
<evidence type="ECO:0000305" key="6">
    <source>
    </source>
</evidence>
<evidence type="ECO:0000312" key="7">
    <source>
        <dbReference type="EMBL" id="CAB3737527.1"/>
    </source>
</evidence>
<evidence type="ECO:0000312" key="8">
    <source>
        <dbReference type="EMBL" id="EDT07597.1"/>
    </source>
</evidence>
<keyword id="KW-0574">Periplasm</keyword>
<keyword id="KW-1185">Reference proteome</keyword>
<keyword id="KW-0732">Signal</keyword>
<keyword id="KW-0762">Sugar transport</keyword>
<keyword id="KW-0813">Transport</keyword>
<sequence>MKASKRWVALAAATLTLFTATGTAQAANLIAIITPSHDNPFFKAEADTANARAKALGYDTIVLVHDDDANKQSNLVDTAIARGAKAIILDNAGSEASISAVRKAKAAGIPSFLIDREINATGIAVSQIVSNNYQGAQLGGRAFVKALGEKGNYVELVGREADINAGIRSKGYHDVIDQFPNMKMVERQSANWSQTEAYRVMETILQSHPDVKGVIAGNDTMAMGASAALKAAKRSDVIVVGFDGSNDVRDAIMRNDIRATVLQPAALAATEAVEQADKYMKTGSTGKPEKQLINCSLITKANAGKLDMFALR</sequence>
<name>APIBP_PARG4</name>
<feature type="signal peptide" evidence="2">
    <location>
        <begin position="1"/>
        <end position="26"/>
    </location>
</feature>
<feature type="chain" id="PRO_5002764152" description="D-apiose import binding protein">
    <location>
        <begin position="27"/>
        <end position="312"/>
    </location>
</feature>
<feature type="binding site" evidence="1">
    <location>
        <position position="39"/>
    </location>
    <ligand>
        <name>D-apiofuranose</name>
        <dbReference type="ChEBI" id="CHEBI:141215"/>
    </ligand>
</feature>
<feature type="binding site" evidence="1">
    <location>
        <begin position="115"/>
        <end position="116"/>
    </location>
    <ligand>
        <name>D-apiofuranose</name>
        <dbReference type="ChEBI" id="CHEBI:141215"/>
    </ligand>
</feature>
<feature type="binding site" evidence="1">
    <location>
        <begin position="162"/>
        <end position="164"/>
    </location>
    <ligand>
        <name>D-apiofuranose</name>
        <dbReference type="ChEBI" id="CHEBI:141215"/>
    </ligand>
</feature>
<feature type="binding site" evidence="1">
    <location>
        <position position="168"/>
    </location>
    <ligand>
        <name>D-apiofuranose</name>
        <dbReference type="ChEBI" id="CHEBI:141215"/>
    </ligand>
</feature>
<feature type="binding site" evidence="1">
    <location>
        <position position="218"/>
    </location>
    <ligand>
        <name>D-apiofuranose</name>
        <dbReference type="ChEBI" id="CHEBI:141215"/>
    </ligand>
</feature>
<feature type="binding site" evidence="1">
    <location>
        <position position="243"/>
    </location>
    <ligand>
        <name>D-apiofuranose</name>
        <dbReference type="ChEBI" id="CHEBI:141215"/>
    </ligand>
</feature>
<feature type="binding site" evidence="1">
    <location>
        <position position="263"/>
    </location>
    <ligand>
        <name>D-apiofuranose</name>
        <dbReference type="ChEBI" id="CHEBI:141215"/>
    </ligand>
</feature>
<accession>B1G898</accession>